<organism>
    <name type="scientific">Maricaulis maris (strain MCS10)</name>
    <name type="common">Caulobacter maris</name>
    <dbReference type="NCBI Taxonomy" id="394221"/>
    <lineage>
        <taxon>Bacteria</taxon>
        <taxon>Pseudomonadati</taxon>
        <taxon>Pseudomonadota</taxon>
        <taxon>Alphaproteobacteria</taxon>
        <taxon>Maricaulales</taxon>
        <taxon>Maricaulaceae</taxon>
        <taxon>Maricaulis</taxon>
    </lineage>
</organism>
<dbReference type="EC" id="3.6.5.-" evidence="1"/>
<dbReference type="EMBL" id="CP000449">
    <property type="protein sequence ID" value="ABI67071.1"/>
    <property type="molecule type" value="Genomic_DNA"/>
</dbReference>
<dbReference type="RefSeq" id="WP_011644715.1">
    <property type="nucleotide sequence ID" value="NC_008347.1"/>
</dbReference>
<dbReference type="SMR" id="Q0AKX2"/>
<dbReference type="STRING" id="394221.Mmar10_2789"/>
<dbReference type="KEGG" id="mmr:Mmar10_2789"/>
<dbReference type="eggNOG" id="COG0536">
    <property type="taxonomic scope" value="Bacteria"/>
</dbReference>
<dbReference type="HOGENOM" id="CLU_011747_2_0_5"/>
<dbReference type="OrthoDB" id="9807318at2"/>
<dbReference type="Proteomes" id="UP000001964">
    <property type="component" value="Chromosome"/>
</dbReference>
<dbReference type="GO" id="GO:0005737">
    <property type="term" value="C:cytoplasm"/>
    <property type="evidence" value="ECO:0007669"/>
    <property type="project" value="UniProtKB-SubCell"/>
</dbReference>
<dbReference type="GO" id="GO:0005525">
    <property type="term" value="F:GTP binding"/>
    <property type="evidence" value="ECO:0007669"/>
    <property type="project" value="UniProtKB-UniRule"/>
</dbReference>
<dbReference type="GO" id="GO:0003924">
    <property type="term" value="F:GTPase activity"/>
    <property type="evidence" value="ECO:0007669"/>
    <property type="project" value="UniProtKB-UniRule"/>
</dbReference>
<dbReference type="GO" id="GO:0000287">
    <property type="term" value="F:magnesium ion binding"/>
    <property type="evidence" value="ECO:0007669"/>
    <property type="project" value="InterPro"/>
</dbReference>
<dbReference type="GO" id="GO:0042254">
    <property type="term" value="P:ribosome biogenesis"/>
    <property type="evidence" value="ECO:0007669"/>
    <property type="project" value="UniProtKB-UniRule"/>
</dbReference>
<dbReference type="CDD" id="cd01898">
    <property type="entry name" value="Obg"/>
    <property type="match status" value="1"/>
</dbReference>
<dbReference type="FunFam" id="2.70.210.12:FF:000001">
    <property type="entry name" value="GTPase Obg"/>
    <property type="match status" value="1"/>
</dbReference>
<dbReference type="Gene3D" id="2.70.210.12">
    <property type="entry name" value="GTP1/OBG domain"/>
    <property type="match status" value="1"/>
</dbReference>
<dbReference type="Gene3D" id="3.40.50.300">
    <property type="entry name" value="P-loop containing nucleotide triphosphate hydrolases"/>
    <property type="match status" value="1"/>
</dbReference>
<dbReference type="HAMAP" id="MF_01454">
    <property type="entry name" value="GTPase_Obg"/>
    <property type="match status" value="1"/>
</dbReference>
<dbReference type="InterPro" id="IPR031167">
    <property type="entry name" value="G_OBG"/>
</dbReference>
<dbReference type="InterPro" id="IPR006073">
    <property type="entry name" value="GTP-bd"/>
</dbReference>
<dbReference type="InterPro" id="IPR014100">
    <property type="entry name" value="GTP-bd_Obg/CgtA"/>
</dbReference>
<dbReference type="InterPro" id="IPR006074">
    <property type="entry name" value="GTP1-OBG_CS"/>
</dbReference>
<dbReference type="InterPro" id="IPR006169">
    <property type="entry name" value="GTP1_OBG_dom"/>
</dbReference>
<dbReference type="InterPro" id="IPR036726">
    <property type="entry name" value="GTP1_OBG_dom_sf"/>
</dbReference>
<dbReference type="InterPro" id="IPR045086">
    <property type="entry name" value="OBG_GTPase"/>
</dbReference>
<dbReference type="InterPro" id="IPR027417">
    <property type="entry name" value="P-loop_NTPase"/>
</dbReference>
<dbReference type="NCBIfam" id="TIGR02729">
    <property type="entry name" value="Obg_CgtA"/>
    <property type="match status" value="1"/>
</dbReference>
<dbReference type="NCBIfam" id="NF008955">
    <property type="entry name" value="PRK12297.1"/>
    <property type="match status" value="1"/>
</dbReference>
<dbReference type="NCBIfam" id="NF008956">
    <property type="entry name" value="PRK12299.1"/>
    <property type="match status" value="1"/>
</dbReference>
<dbReference type="PANTHER" id="PTHR11702">
    <property type="entry name" value="DEVELOPMENTALLY REGULATED GTP-BINDING PROTEIN-RELATED"/>
    <property type="match status" value="1"/>
</dbReference>
<dbReference type="PANTHER" id="PTHR11702:SF31">
    <property type="entry name" value="MITOCHONDRIAL RIBOSOME-ASSOCIATED GTPASE 2"/>
    <property type="match status" value="1"/>
</dbReference>
<dbReference type="Pfam" id="PF01018">
    <property type="entry name" value="GTP1_OBG"/>
    <property type="match status" value="1"/>
</dbReference>
<dbReference type="Pfam" id="PF01926">
    <property type="entry name" value="MMR_HSR1"/>
    <property type="match status" value="1"/>
</dbReference>
<dbReference type="PIRSF" id="PIRSF002401">
    <property type="entry name" value="GTP_bd_Obg/CgtA"/>
    <property type="match status" value="1"/>
</dbReference>
<dbReference type="PRINTS" id="PR00326">
    <property type="entry name" value="GTP1OBG"/>
</dbReference>
<dbReference type="SUPFAM" id="SSF82051">
    <property type="entry name" value="Obg GTP-binding protein N-terminal domain"/>
    <property type="match status" value="1"/>
</dbReference>
<dbReference type="SUPFAM" id="SSF52540">
    <property type="entry name" value="P-loop containing nucleoside triphosphate hydrolases"/>
    <property type="match status" value="1"/>
</dbReference>
<dbReference type="PROSITE" id="PS51710">
    <property type="entry name" value="G_OBG"/>
    <property type="match status" value="1"/>
</dbReference>
<dbReference type="PROSITE" id="PS00905">
    <property type="entry name" value="GTP1_OBG"/>
    <property type="match status" value="1"/>
</dbReference>
<dbReference type="PROSITE" id="PS51883">
    <property type="entry name" value="OBG"/>
    <property type="match status" value="1"/>
</dbReference>
<feature type="chain" id="PRO_0000386031" description="GTPase Obg">
    <location>
        <begin position="1"/>
        <end position="351"/>
    </location>
</feature>
<feature type="domain" description="Obg" evidence="2">
    <location>
        <begin position="1"/>
        <end position="159"/>
    </location>
</feature>
<feature type="domain" description="OBG-type G" evidence="1">
    <location>
        <begin position="160"/>
        <end position="328"/>
    </location>
</feature>
<feature type="binding site" evidence="1">
    <location>
        <begin position="166"/>
        <end position="173"/>
    </location>
    <ligand>
        <name>GTP</name>
        <dbReference type="ChEBI" id="CHEBI:37565"/>
    </ligand>
</feature>
<feature type="binding site" evidence="1">
    <location>
        <position position="173"/>
    </location>
    <ligand>
        <name>Mg(2+)</name>
        <dbReference type="ChEBI" id="CHEBI:18420"/>
    </ligand>
</feature>
<feature type="binding site" evidence="1">
    <location>
        <begin position="191"/>
        <end position="195"/>
    </location>
    <ligand>
        <name>GTP</name>
        <dbReference type="ChEBI" id="CHEBI:37565"/>
    </ligand>
</feature>
<feature type="binding site" evidence="1">
    <location>
        <position position="193"/>
    </location>
    <ligand>
        <name>Mg(2+)</name>
        <dbReference type="ChEBI" id="CHEBI:18420"/>
    </ligand>
</feature>
<feature type="binding site" evidence="1">
    <location>
        <begin position="213"/>
        <end position="216"/>
    </location>
    <ligand>
        <name>GTP</name>
        <dbReference type="ChEBI" id="CHEBI:37565"/>
    </ligand>
</feature>
<feature type="binding site" evidence="1">
    <location>
        <begin position="280"/>
        <end position="283"/>
    </location>
    <ligand>
        <name>GTP</name>
        <dbReference type="ChEBI" id="CHEBI:37565"/>
    </ligand>
</feature>
<feature type="binding site" evidence="1">
    <location>
        <begin position="309"/>
        <end position="311"/>
    </location>
    <ligand>
        <name>GTP</name>
        <dbReference type="ChEBI" id="CHEBI:37565"/>
    </ligand>
</feature>
<comment type="function">
    <text evidence="1">An essential GTPase which binds GTP, GDP and possibly (p)ppGpp with moderate affinity, with high nucleotide exchange rates and a fairly low GTP hydrolysis rate. Plays a role in control of the cell cycle, stress response, ribosome biogenesis and in those bacteria that undergo differentiation, in morphogenesis control.</text>
</comment>
<comment type="cofactor">
    <cofactor evidence="1">
        <name>Mg(2+)</name>
        <dbReference type="ChEBI" id="CHEBI:18420"/>
    </cofactor>
</comment>
<comment type="subunit">
    <text evidence="1">Monomer.</text>
</comment>
<comment type="subcellular location">
    <subcellularLocation>
        <location evidence="1">Cytoplasm</location>
    </subcellularLocation>
</comment>
<comment type="similarity">
    <text evidence="1">Belongs to the TRAFAC class OBG-HflX-like GTPase superfamily. OBG GTPase family.</text>
</comment>
<name>OBG_MARMM</name>
<keyword id="KW-0963">Cytoplasm</keyword>
<keyword id="KW-0342">GTP-binding</keyword>
<keyword id="KW-0378">Hydrolase</keyword>
<keyword id="KW-0460">Magnesium</keyword>
<keyword id="KW-0479">Metal-binding</keyword>
<keyword id="KW-0547">Nucleotide-binding</keyword>
<keyword id="KW-1185">Reference proteome</keyword>
<proteinExistence type="inferred from homology"/>
<protein>
    <recommendedName>
        <fullName evidence="1">GTPase Obg</fullName>
        <ecNumber evidence="1">3.6.5.-</ecNumber>
    </recommendedName>
    <alternativeName>
        <fullName evidence="1">GTP-binding protein Obg</fullName>
    </alternativeName>
</protein>
<evidence type="ECO:0000255" key="1">
    <source>
        <dbReference type="HAMAP-Rule" id="MF_01454"/>
    </source>
</evidence>
<evidence type="ECO:0000255" key="2">
    <source>
        <dbReference type="PROSITE-ProRule" id="PRU01231"/>
    </source>
</evidence>
<sequence>MKFLDQAKVYVRSGNGGGGCVSFRREAYVEYGGPDGGDGGKGGDVWVEAVEGLNTLIDYRYKQHFKADTGMHGMGRNRTGSGGEDVVLQVPAGTQLLDEDKEEILADLTEIGQRVLLARGGDGGKGNSHFKTSTNQAPRKTIPGWPGEERWIWLRLKLIADVGLVGLPNAGKSTFLSVVSKANPKIAAYPFTTLYPNLGVVDLGPGSRFIVADIPGLIEGAHEGAGIGDRFLGHIERCASLIHLIDGTQDDVVAAYKTVRGELEAYGDGLPEKQEILALNKIDAMDEAMVAEKRAELEAASGKTVMTLSGVSGDGVKALCGSAWDIVLQNRRAEKAAAEAAEKGEEGWAPS</sequence>
<accession>Q0AKX2</accession>
<reference key="1">
    <citation type="submission" date="2006-08" db="EMBL/GenBank/DDBJ databases">
        <title>Complete sequence of Maricaulis maris MCS10.</title>
        <authorList>
            <consortium name="US DOE Joint Genome Institute"/>
            <person name="Copeland A."/>
            <person name="Lucas S."/>
            <person name="Lapidus A."/>
            <person name="Barry K."/>
            <person name="Detter J.C."/>
            <person name="Glavina del Rio T."/>
            <person name="Hammon N."/>
            <person name="Israni S."/>
            <person name="Dalin E."/>
            <person name="Tice H."/>
            <person name="Pitluck S."/>
            <person name="Saunders E."/>
            <person name="Brettin T."/>
            <person name="Bruce D."/>
            <person name="Han C."/>
            <person name="Tapia R."/>
            <person name="Gilna P."/>
            <person name="Schmutz J."/>
            <person name="Larimer F."/>
            <person name="Land M."/>
            <person name="Hauser L."/>
            <person name="Kyrpides N."/>
            <person name="Mikhailova N."/>
            <person name="Viollier P."/>
            <person name="Stephens C."/>
            <person name="Richardson P."/>
        </authorList>
    </citation>
    <scope>NUCLEOTIDE SEQUENCE [LARGE SCALE GENOMIC DNA]</scope>
    <source>
        <strain>MCS10</strain>
    </source>
</reference>
<gene>
    <name evidence="1" type="primary">obg</name>
    <name type="ordered locus">Mmar10_2789</name>
</gene>